<comment type="function">
    <text evidence="1">Component of the acetyl coenzyme A carboxylase (ACC) complex. First, biotin carboxylase catalyzes the carboxylation of biotin on its carrier protein (BCCP) and then the CO(2) group is transferred by the carboxyltransferase to acetyl-CoA to form malonyl-CoA.</text>
</comment>
<comment type="catalytic activity">
    <reaction evidence="1">
        <text>N(6)-carboxybiotinyl-L-lysyl-[protein] + acetyl-CoA = N(6)-biotinyl-L-lysyl-[protein] + malonyl-CoA</text>
        <dbReference type="Rhea" id="RHEA:54728"/>
        <dbReference type="Rhea" id="RHEA-COMP:10505"/>
        <dbReference type="Rhea" id="RHEA-COMP:10506"/>
        <dbReference type="ChEBI" id="CHEBI:57288"/>
        <dbReference type="ChEBI" id="CHEBI:57384"/>
        <dbReference type="ChEBI" id="CHEBI:83144"/>
        <dbReference type="ChEBI" id="CHEBI:83145"/>
        <dbReference type="EC" id="2.1.3.15"/>
    </reaction>
</comment>
<comment type="pathway">
    <text evidence="1">Lipid metabolism; malonyl-CoA biosynthesis; malonyl-CoA from acetyl-CoA: step 1/1.</text>
</comment>
<comment type="subunit">
    <text evidence="1">Acetyl-CoA carboxylase is a heterohexamer composed of biotin carboxyl carrier protein (AccB), biotin carboxylase (AccC) and two subunits each of ACCase subunit alpha (AccA) and ACCase subunit beta (AccD).</text>
</comment>
<comment type="subcellular location">
    <subcellularLocation>
        <location evidence="1">Cytoplasm</location>
    </subcellularLocation>
</comment>
<comment type="similarity">
    <text evidence="1">Belongs to the AccA family.</text>
</comment>
<comment type="sequence caution" evidence="3">
    <conflict type="erroneous initiation">
        <sequence resource="EMBL-CDS" id="AAU37375"/>
    </conflict>
</comment>
<dbReference type="EC" id="2.1.3.15" evidence="1"/>
<dbReference type="EMBL" id="AE016827">
    <property type="protein sequence ID" value="AAU37375.1"/>
    <property type="status" value="ALT_INIT"/>
    <property type="molecule type" value="Genomic_DNA"/>
</dbReference>
<dbReference type="RefSeq" id="WP_011199947.1">
    <property type="nucleotide sequence ID" value="NC_006300.1"/>
</dbReference>
<dbReference type="SMR" id="Q65UI5"/>
<dbReference type="STRING" id="221988.MS0768"/>
<dbReference type="KEGG" id="msu:MS0768"/>
<dbReference type="eggNOG" id="COG0825">
    <property type="taxonomic scope" value="Bacteria"/>
</dbReference>
<dbReference type="HOGENOM" id="CLU_015486_0_2_6"/>
<dbReference type="OrthoDB" id="9808023at2"/>
<dbReference type="UniPathway" id="UPA00655">
    <property type="reaction ID" value="UER00711"/>
</dbReference>
<dbReference type="Proteomes" id="UP000000607">
    <property type="component" value="Chromosome"/>
</dbReference>
<dbReference type="GO" id="GO:0009317">
    <property type="term" value="C:acetyl-CoA carboxylase complex"/>
    <property type="evidence" value="ECO:0007669"/>
    <property type="project" value="InterPro"/>
</dbReference>
<dbReference type="GO" id="GO:0003989">
    <property type="term" value="F:acetyl-CoA carboxylase activity"/>
    <property type="evidence" value="ECO:0007669"/>
    <property type="project" value="InterPro"/>
</dbReference>
<dbReference type="GO" id="GO:0005524">
    <property type="term" value="F:ATP binding"/>
    <property type="evidence" value="ECO:0007669"/>
    <property type="project" value="UniProtKB-KW"/>
</dbReference>
<dbReference type="GO" id="GO:0016743">
    <property type="term" value="F:carboxyl- or carbamoyltransferase activity"/>
    <property type="evidence" value="ECO:0007669"/>
    <property type="project" value="UniProtKB-UniRule"/>
</dbReference>
<dbReference type="GO" id="GO:0006633">
    <property type="term" value="P:fatty acid biosynthetic process"/>
    <property type="evidence" value="ECO:0007669"/>
    <property type="project" value="UniProtKB-KW"/>
</dbReference>
<dbReference type="GO" id="GO:2001295">
    <property type="term" value="P:malonyl-CoA biosynthetic process"/>
    <property type="evidence" value="ECO:0007669"/>
    <property type="project" value="UniProtKB-UniRule"/>
</dbReference>
<dbReference type="FunFam" id="3.90.226.10:FF:000008">
    <property type="entry name" value="Acetyl-coenzyme A carboxylase carboxyl transferase subunit alpha"/>
    <property type="match status" value="1"/>
</dbReference>
<dbReference type="Gene3D" id="3.90.226.10">
    <property type="entry name" value="2-enoyl-CoA Hydratase, Chain A, domain 1"/>
    <property type="match status" value="1"/>
</dbReference>
<dbReference type="HAMAP" id="MF_00823">
    <property type="entry name" value="AcetylCoA_CT_alpha"/>
    <property type="match status" value="1"/>
</dbReference>
<dbReference type="InterPro" id="IPR001095">
    <property type="entry name" value="Acetyl_CoA_COase_a_su"/>
</dbReference>
<dbReference type="InterPro" id="IPR029045">
    <property type="entry name" value="ClpP/crotonase-like_dom_sf"/>
</dbReference>
<dbReference type="InterPro" id="IPR011763">
    <property type="entry name" value="COA_CT_C"/>
</dbReference>
<dbReference type="NCBIfam" id="TIGR00513">
    <property type="entry name" value="accA"/>
    <property type="match status" value="1"/>
</dbReference>
<dbReference type="NCBIfam" id="NF041504">
    <property type="entry name" value="AccA_sub"/>
    <property type="match status" value="1"/>
</dbReference>
<dbReference type="NCBIfam" id="NF004344">
    <property type="entry name" value="PRK05724.1"/>
    <property type="match status" value="1"/>
</dbReference>
<dbReference type="PANTHER" id="PTHR42853">
    <property type="entry name" value="ACETYL-COENZYME A CARBOXYLASE CARBOXYL TRANSFERASE SUBUNIT ALPHA"/>
    <property type="match status" value="1"/>
</dbReference>
<dbReference type="PANTHER" id="PTHR42853:SF3">
    <property type="entry name" value="ACETYL-COENZYME A CARBOXYLASE CARBOXYL TRANSFERASE SUBUNIT ALPHA, CHLOROPLASTIC"/>
    <property type="match status" value="1"/>
</dbReference>
<dbReference type="Pfam" id="PF03255">
    <property type="entry name" value="ACCA"/>
    <property type="match status" value="1"/>
</dbReference>
<dbReference type="PRINTS" id="PR01069">
    <property type="entry name" value="ACCCTRFRASEA"/>
</dbReference>
<dbReference type="SUPFAM" id="SSF52096">
    <property type="entry name" value="ClpP/crotonase"/>
    <property type="match status" value="1"/>
</dbReference>
<dbReference type="PROSITE" id="PS50989">
    <property type="entry name" value="COA_CT_CTER"/>
    <property type="match status" value="1"/>
</dbReference>
<keyword id="KW-0067">ATP-binding</keyword>
<keyword id="KW-0963">Cytoplasm</keyword>
<keyword id="KW-0275">Fatty acid biosynthesis</keyword>
<keyword id="KW-0276">Fatty acid metabolism</keyword>
<keyword id="KW-0444">Lipid biosynthesis</keyword>
<keyword id="KW-0443">Lipid metabolism</keyword>
<keyword id="KW-0547">Nucleotide-binding</keyword>
<keyword id="KW-0808">Transferase</keyword>
<accession>Q65UI5</accession>
<sequence length="321" mass="35881">MSQQNQTEYLDFELPIAELEAKIESLRSVTDQDSKIDLDDEIKRLQKKTAELTKKTFADLDAWQVSRMARHPNRPYTLDYISRIFTEFEELAGDRAFADDKAIVGGLARLDGRPVMVIGHQKGRSVKEKVLRNFGMPAPEGYRKALRLMQMAERFRLPIITFIDTPGAYPGVGAEERGQSEAIARNLREMSTLTVPVICTVIGEGGSGGALAIGVGDKVNMLQYSTYSVISPEGCASILWKSAEKASTAAEVMGLTASRLKELELIDNIVTEPLGGAHRQYDEMAQALKQRILSDLEDLDILDKETLLDRRYQRLMNYGYV</sequence>
<gene>
    <name evidence="1" type="primary">accA</name>
    <name type="ordered locus">MS0768</name>
</gene>
<evidence type="ECO:0000255" key="1">
    <source>
        <dbReference type="HAMAP-Rule" id="MF_00823"/>
    </source>
</evidence>
<evidence type="ECO:0000255" key="2">
    <source>
        <dbReference type="PROSITE-ProRule" id="PRU01137"/>
    </source>
</evidence>
<evidence type="ECO:0000305" key="3"/>
<name>ACCA_MANSM</name>
<reference key="1">
    <citation type="journal article" date="2004" name="Nat. Biotechnol.">
        <title>The genome sequence of the capnophilic rumen bacterium Mannheimia succiniciproducens.</title>
        <authorList>
            <person name="Hong S.H."/>
            <person name="Kim J.S."/>
            <person name="Lee S.Y."/>
            <person name="In Y.H."/>
            <person name="Choi S.S."/>
            <person name="Rih J.-K."/>
            <person name="Kim C.H."/>
            <person name="Jeong H."/>
            <person name="Hur C.G."/>
            <person name="Kim J.J."/>
        </authorList>
    </citation>
    <scope>NUCLEOTIDE SEQUENCE [LARGE SCALE GENOMIC DNA]</scope>
    <source>
        <strain>KCTC 0769BP / MBEL55E</strain>
    </source>
</reference>
<organism>
    <name type="scientific">Mannheimia succiniciproducens (strain KCTC 0769BP / MBEL55E)</name>
    <dbReference type="NCBI Taxonomy" id="221988"/>
    <lineage>
        <taxon>Bacteria</taxon>
        <taxon>Pseudomonadati</taxon>
        <taxon>Pseudomonadota</taxon>
        <taxon>Gammaproteobacteria</taxon>
        <taxon>Pasteurellales</taxon>
        <taxon>Pasteurellaceae</taxon>
        <taxon>Basfia</taxon>
    </lineage>
</organism>
<protein>
    <recommendedName>
        <fullName evidence="1">Acetyl-coenzyme A carboxylase carboxyl transferase subunit alpha</fullName>
        <shortName evidence="1">ACCase subunit alpha</shortName>
        <shortName evidence="1">Acetyl-CoA carboxylase carboxyltransferase subunit alpha</shortName>
        <ecNumber evidence="1">2.1.3.15</ecNumber>
    </recommendedName>
</protein>
<proteinExistence type="inferred from homology"/>
<feature type="chain" id="PRO_0000223786" description="Acetyl-coenzyme A carboxylase carboxyl transferase subunit alpha">
    <location>
        <begin position="1"/>
        <end position="321"/>
    </location>
</feature>
<feature type="domain" description="CoA carboxyltransferase C-terminal" evidence="2">
    <location>
        <begin position="37"/>
        <end position="298"/>
    </location>
</feature>